<proteinExistence type="inferred from homology"/>
<accession>C4YCH0</accession>
<protein>
    <recommendedName>
        <fullName evidence="1">Catabolic 3-dehydroquinase</fullName>
        <shortName evidence="1">cDHQase</shortName>
        <ecNumber evidence="1">4.2.1.10</ecNumber>
    </recommendedName>
    <alternativeName>
        <fullName evidence="1">3-dehydroquinate dehydratase</fullName>
    </alternativeName>
</protein>
<organism>
    <name type="scientific">Clavispora lusitaniae (strain ATCC 42720)</name>
    <name type="common">Yeast</name>
    <name type="synonym">Candida lusitaniae</name>
    <dbReference type="NCBI Taxonomy" id="306902"/>
    <lineage>
        <taxon>Eukaryota</taxon>
        <taxon>Fungi</taxon>
        <taxon>Dikarya</taxon>
        <taxon>Ascomycota</taxon>
        <taxon>Saccharomycotina</taxon>
        <taxon>Pichiomycetes</taxon>
        <taxon>Metschnikowiaceae</taxon>
        <taxon>Clavispora</taxon>
    </lineage>
</organism>
<dbReference type="EC" id="4.2.1.10" evidence="1"/>
<dbReference type="EMBL" id="CH408083">
    <property type="protein sequence ID" value="EEQ41681.1"/>
    <property type="molecule type" value="Genomic_DNA"/>
</dbReference>
<dbReference type="RefSeq" id="XP_002614323.1">
    <property type="nucleotide sequence ID" value="XM_002614277.1"/>
</dbReference>
<dbReference type="SMR" id="C4YCH0"/>
<dbReference type="GeneID" id="8494624"/>
<dbReference type="KEGG" id="clu:CLUG_05809"/>
<dbReference type="VEuPathDB" id="FungiDB:CLUG_05809"/>
<dbReference type="HOGENOM" id="CLU_090968_1_0_1"/>
<dbReference type="InParanoid" id="C4YCH0"/>
<dbReference type="OMA" id="AYTHYSY"/>
<dbReference type="OrthoDB" id="8391at4891"/>
<dbReference type="UniPathway" id="UPA00088">
    <property type="reaction ID" value="UER00178"/>
</dbReference>
<dbReference type="Proteomes" id="UP000007703">
    <property type="component" value="Unassembled WGS sequence"/>
</dbReference>
<dbReference type="GO" id="GO:0003855">
    <property type="term" value="F:3-dehydroquinate dehydratase activity"/>
    <property type="evidence" value="ECO:0007669"/>
    <property type="project" value="UniProtKB-UniRule"/>
</dbReference>
<dbReference type="GO" id="GO:0046279">
    <property type="term" value="P:3,4-dihydroxybenzoate biosynthetic process"/>
    <property type="evidence" value="ECO:0007669"/>
    <property type="project" value="UniProtKB-UniRule"/>
</dbReference>
<dbReference type="GO" id="GO:0019631">
    <property type="term" value="P:quinate catabolic process"/>
    <property type="evidence" value="ECO:0007669"/>
    <property type="project" value="TreeGrafter"/>
</dbReference>
<dbReference type="CDD" id="cd00466">
    <property type="entry name" value="DHQase_II"/>
    <property type="match status" value="1"/>
</dbReference>
<dbReference type="Gene3D" id="3.40.50.9100">
    <property type="entry name" value="Dehydroquinase, class II"/>
    <property type="match status" value="1"/>
</dbReference>
<dbReference type="HAMAP" id="MF_00169">
    <property type="entry name" value="AroQ"/>
    <property type="match status" value="1"/>
</dbReference>
<dbReference type="InterPro" id="IPR001874">
    <property type="entry name" value="DHquinase_II"/>
</dbReference>
<dbReference type="InterPro" id="IPR018509">
    <property type="entry name" value="DHquinase_II_CS"/>
</dbReference>
<dbReference type="InterPro" id="IPR036441">
    <property type="entry name" value="DHquinase_II_sf"/>
</dbReference>
<dbReference type="NCBIfam" id="TIGR01088">
    <property type="entry name" value="aroQ"/>
    <property type="match status" value="1"/>
</dbReference>
<dbReference type="NCBIfam" id="NF003804">
    <property type="entry name" value="PRK05395.1-1"/>
    <property type="match status" value="1"/>
</dbReference>
<dbReference type="NCBIfam" id="NF003805">
    <property type="entry name" value="PRK05395.1-2"/>
    <property type="match status" value="1"/>
</dbReference>
<dbReference type="NCBIfam" id="NF003806">
    <property type="entry name" value="PRK05395.1-3"/>
    <property type="match status" value="1"/>
</dbReference>
<dbReference type="NCBIfam" id="NF003807">
    <property type="entry name" value="PRK05395.1-4"/>
    <property type="match status" value="1"/>
</dbReference>
<dbReference type="PANTHER" id="PTHR21272">
    <property type="entry name" value="CATABOLIC 3-DEHYDROQUINASE"/>
    <property type="match status" value="1"/>
</dbReference>
<dbReference type="PANTHER" id="PTHR21272:SF3">
    <property type="entry name" value="CATABOLIC 3-DEHYDROQUINASE"/>
    <property type="match status" value="1"/>
</dbReference>
<dbReference type="Pfam" id="PF01220">
    <property type="entry name" value="DHquinase_II"/>
    <property type="match status" value="1"/>
</dbReference>
<dbReference type="PIRSF" id="PIRSF001399">
    <property type="entry name" value="DHquinase_II"/>
    <property type="match status" value="1"/>
</dbReference>
<dbReference type="SUPFAM" id="SSF52304">
    <property type="entry name" value="Type II 3-dehydroquinate dehydratase"/>
    <property type="match status" value="1"/>
</dbReference>
<dbReference type="PROSITE" id="PS01029">
    <property type="entry name" value="DEHYDROQUINASE_II"/>
    <property type="match status" value="1"/>
</dbReference>
<comment type="function">
    <text evidence="1">Is involved in the catabolism of quinate. Allows the utilization of quinate as carbon source via the beta-ketoadipate pathway.</text>
</comment>
<comment type="catalytic activity">
    <reaction evidence="1">
        <text>3-dehydroquinate = 3-dehydroshikimate + H2O</text>
        <dbReference type="Rhea" id="RHEA:21096"/>
        <dbReference type="ChEBI" id="CHEBI:15377"/>
        <dbReference type="ChEBI" id="CHEBI:16630"/>
        <dbReference type="ChEBI" id="CHEBI:32364"/>
        <dbReference type="EC" id="4.2.1.10"/>
    </reaction>
</comment>
<comment type="pathway">
    <text evidence="1">Aromatic compound metabolism; 3,4-dihydroxybenzoate biosynthesis; 3,4-dihydroxybenzoate from 3-dehydroquinate: step 1/2.</text>
</comment>
<comment type="subunit">
    <text evidence="1">Homododecamer. Adopts a ring-like structure, composed of an arrangement of two hexameric rings stacked on top of one another.</text>
</comment>
<comment type="similarity">
    <text evidence="1">Belongs to the type-II 3-dehydroquinase family.</text>
</comment>
<gene>
    <name evidence="1" type="primary">DQD1</name>
    <name type="ORF">CLUG_05809</name>
</gene>
<sequence>MVKKVLLINGPNLNLLGTREPEKYGTTTLKDIEMEAHQQVAKHQDAELFTYQNNTEGFIIDRIQEAKQQGVGFIIINAGAYTHTSVGIRDALLGTAIPFIEVHITNVHQREPFRHHSYLSDKAIAVIAGLGVYGYTAAIEYALNY</sequence>
<evidence type="ECO:0000255" key="1">
    <source>
        <dbReference type="HAMAP-Rule" id="MF_03136"/>
    </source>
</evidence>
<name>3DHQ_CLAL4</name>
<reference key="1">
    <citation type="journal article" date="2009" name="Nature">
        <title>Evolution of pathogenicity and sexual reproduction in eight Candida genomes.</title>
        <authorList>
            <person name="Butler G."/>
            <person name="Rasmussen M.D."/>
            <person name="Lin M.F."/>
            <person name="Santos M.A.S."/>
            <person name="Sakthikumar S."/>
            <person name="Munro C.A."/>
            <person name="Rheinbay E."/>
            <person name="Grabherr M."/>
            <person name="Forche A."/>
            <person name="Reedy J.L."/>
            <person name="Agrafioti I."/>
            <person name="Arnaud M.B."/>
            <person name="Bates S."/>
            <person name="Brown A.J.P."/>
            <person name="Brunke S."/>
            <person name="Costanzo M.C."/>
            <person name="Fitzpatrick D.A."/>
            <person name="de Groot P.W.J."/>
            <person name="Harris D."/>
            <person name="Hoyer L.L."/>
            <person name="Hube B."/>
            <person name="Klis F.M."/>
            <person name="Kodira C."/>
            <person name="Lennard N."/>
            <person name="Logue M.E."/>
            <person name="Martin R."/>
            <person name="Neiman A.M."/>
            <person name="Nikolaou E."/>
            <person name="Quail M.A."/>
            <person name="Quinn J."/>
            <person name="Santos M.C."/>
            <person name="Schmitzberger F.F."/>
            <person name="Sherlock G."/>
            <person name="Shah P."/>
            <person name="Silverstein K.A.T."/>
            <person name="Skrzypek M.S."/>
            <person name="Soll D."/>
            <person name="Staggs R."/>
            <person name="Stansfield I."/>
            <person name="Stumpf M.P.H."/>
            <person name="Sudbery P.E."/>
            <person name="Srikantha T."/>
            <person name="Zeng Q."/>
            <person name="Berman J."/>
            <person name="Berriman M."/>
            <person name="Heitman J."/>
            <person name="Gow N.A.R."/>
            <person name="Lorenz M.C."/>
            <person name="Birren B.W."/>
            <person name="Kellis M."/>
            <person name="Cuomo C.A."/>
        </authorList>
    </citation>
    <scope>NUCLEOTIDE SEQUENCE [LARGE SCALE GENOMIC DNA]</scope>
    <source>
        <strain>ATCC 42720</strain>
    </source>
</reference>
<feature type="chain" id="PRO_0000402364" description="Catabolic 3-dehydroquinase">
    <location>
        <begin position="1"/>
        <end position="145"/>
    </location>
</feature>
<feature type="active site" description="Proton acceptor" evidence="1">
    <location>
        <position position="24"/>
    </location>
</feature>
<feature type="active site" description="Proton donor" evidence="1">
    <location>
        <position position="103"/>
    </location>
</feature>
<feature type="binding site" evidence="1">
    <location>
        <position position="77"/>
    </location>
    <ligand>
        <name>substrate</name>
    </ligand>
</feature>
<feature type="binding site" evidence="1">
    <location>
        <position position="83"/>
    </location>
    <ligand>
        <name>substrate</name>
    </ligand>
</feature>
<feature type="binding site" evidence="1">
    <location>
        <position position="90"/>
    </location>
    <ligand>
        <name>substrate</name>
    </ligand>
</feature>
<feature type="binding site" evidence="1">
    <location>
        <begin position="104"/>
        <end position="105"/>
    </location>
    <ligand>
        <name>substrate</name>
    </ligand>
</feature>
<feature type="binding site" evidence="1">
    <location>
        <position position="114"/>
    </location>
    <ligand>
        <name>substrate</name>
    </ligand>
</feature>
<feature type="site" description="Transition state stabilizer" evidence="1">
    <location>
        <position position="19"/>
    </location>
</feature>
<keyword id="KW-0456">Lyase</keyword>
<keyword id="KW-0672">Quinate metabolism</keyword>
<keyword id="KW-1185">Reference proteome</keyword>